<keyword id="KW-1185">Reference proteome</keyword>
<dbReference type="EMBL" id="AE000783">
    <property type="protein sequence ID" value="AAC66728.1"/>
    <property type="molecule type" value="Genomic_DNA"/>
</dbReference>
<dbReference type="PIR" id="B70141">
    <property type="entry name" value="B70141"/>
</dbReference>
<dbReference type="RefSeq" id="NP_212465.1">
    <property type="nucleotide sequence ID" value="NC_001318.1"/>
</dbReference>
<dbReference type="STRING" id="224326.BB_0331"/>
<dbReference type="PaxDb" id="224326-BB_0331"/>
<dbReference type="EnsemblBacteria" id="AAC66728">
    <property type="protein sequence ID" value="AAC66728"/>
    <property type="gene ID" value="BB_0331"/>
</dbReference>
<dbReference type="KEGG" id="bbu:BB_0331"/>
<dbReference type="HOGENOM" id="CLU_3096225_0_0_12"/>
<dbReference type="Proteomes" id="UP000001807">
    <property type="component" value="Chromosome"/>
</dbReference>
<name>Y331_BORBU</name>
<sequence length="51" mass="6444">MSNLIFNKMYFLFLIFYLKFYSLDLRRIFLCKILSKIIIESYTLFMYFCFK</sequence>
<proteinExistence type="predicted"/>
<organism>
    <name type="scientific">Borreliella burgdorferi (strain ATCC 35210 / DSM 4680 / CIP 102532 / B31)</name>
    <name type="common">Borrelia burgdorferi</name>
    <dbReference type="NCBI Taxonomy" id="224326"/>
    <lineage>
        <taxon>Bacteria</taxon>
        <taxon>Pseudomonadati</taxon>
        <taxon>Spirochaetota</taxon>
        <taxon>Spirochaetia</taxon>
        <taxon>Spirochaetales</taxon>
        <taxon>Borreliaceae</taxon>
        <taxon>Borreliella</taxon>
    </lineage>
</organism>
<gene>
    <name type="ordered locus">BB_0331</name>
</gene>
<reference key="1">
    <citation type="journal article" date="1997" name="Nature">
        <title>Genomic sequence of a Lyme disease spirochaete, Borrelia burgdorferi.</title>
        <authorList>
            <person name="Fraser C.M."/>
            <person name="Casjens S."/>
            <person name="Huang W.M."/>
            <person name="Sutton G.G."/>
            <person name="Clayton R.A."/>
            <person name="Lathigra R."/>
            <person name="White O."/>
            <person name="Ketchum K.A."/>
            <person name="Dodson R.J."/>
            <person name="Hickey E.K."/>
            <person name="Gwinn M.L."/>
            <person name="Dougherty B.A."/>
            <person name="Tomb J.-F."/>
            <person name="Fleischmann R.D."/>
            <person name="Richardson D.L."/>
            <person name="Peterson J.D."/>
            <person name="Kerlavage A.R."/>
            <person name="Quackenbush J."/>
            <person name="Salzberg S.L."/>
            <person name="Hanson M."/>
            <person name="van Vugt R."/>
            <person name="Palmer N."/>
            <person name="Adams M.D."/>
            <person name="Gocayne J.D."/>
            <person name="Weidman J.F."/>
            <person name="Utterback T.R."/>
            <person name="Watthey L."/>
            <person name="McDonald L.A."/>
            <person name="Artiach P."/>
            <person name="Bowman C."/>
            <person name="Garland S.A."/>
            <person name="Fujii C."/>
            <person name="Cotton M.D."/>
            <person name="Horst K."/>
            <person name="Roberts K.M."/>
            <person name="Hatch B."/>
            <person name="Smith H.O."/>
            <person name="Venter J.C."/>
        </authorList>
    </citation>
    <scope>NUCLEOTIDE SEQUENCE [LARGE SCALE GENOMIC DNA]</scope>
    <source>
        <strain>ATCC 35210 / DSM 4680 / CIP 102532 / B31</strain>
    </source>
</reference>
<feature type="chain" id="PRO_0000174392" description="Uncharacterized protein BB_0331">
    <location>
        <begin position="1"/>
        <end position="51"/>
    </location>
</feature>
<accession>O51309</accession>
<protein>
    <recommendedName>
        <fullName>Uncharacterized protein BB_0331</fullName>
    </recommendedName>
</protein>